<protein>
    <recommendedName>
        <fullName evidence="1">Protein PsiE</fullName>
    </recommendedName>
</protein>
<name>PSIE_SALEP</name>
<proteinExistence type="inferred from homology"/>
<keyword id="KW-0997">Cell inner membrane</keyword>
<keyword id="KW-1003">Cell membrane</keyword>
<keyword id="KW-0472">Membrane</keyword>
<keyword id="KW-0812">Transmembrane</keyword>
<keyword id="KW-1133">Transmembrane helix</keyword>
<accession>B5QYI9</accession>
<feature type="chain" id="PRO_1000136219" description="Protein PsiE">
    <location>
        <begin position="1"/>
        <end position="136"/>
    </location>
</feature>
<feature type="transmembrane region" description="Helical" evidence="1">
    <location>
        <begin position="15"/>
        <end position="35"/>
    </location>
</feature>
<feature type="transmembrane region" description="Helical" evidence="1">
    <location>
        <begin position="55"/>
        <end position="75"/>
    </location>
</feature>
<feature type="transmembrane region" description="Helical" evidence="1">
    <location>
        <begin position="83"/>
        <end position="103"/>
    </location>
</feature>
<feature type="transmembrane region" description="Helical" evidence="1">
    <location>
        <begin position="108"/>
        <end position="128"/>
    </location>
</feature>
<evidence type="ECO:0000255" key="1">
    <source>
        <dbReference type="HAMAP-Rule" id="MF_01048"/>
    </source>
</evidence>
<gene>
    <name evidence="1" type="primary">psiE</name>
    <name type="ordered locus">SEN3993</name>
</gene>
<sequence>MMPLSRSRLEFIATILQNVLNLGLLTLGLILVVFLGKETVHLADALFVPEQASKYELVEGLVIYFLYFEFIALIVKYFKSGLHFPLRYFVYIGITAIVRLIIVDHKTPMDVLLYSAAILLLVITLWLCNSNRLRRE</sequence>
<organism>
    <name type="scientific">Salmonella enteritidis PT4 (strain P125109)</name>
    <dbReference type="NCBI Taxonomy" id="550537"/>
    <lineage>
        <taxon>Bacteria</taxon>
        <taxon>Pseudomonadati</taxon>
        <taxon>Pseudomonadota</taxon>
        <taxon>Gammaproteobacteria</taxon>
        <taxon>Enterobacterales</taxon>
        <taxon>Enterobacteriaceae</taxon>
        <taxon>Salmonella</taxon>
    </lineage>
</organism>
<reference key="1">
    <citation type="journal article" date="2008" name="Genome Res.">
        <title>Comparative genome analysis of Salmonella enteritidis PT4 and Salmonella gallinarum 287/91 provides insights into evolutionary and host adaptation pathways.</title>
        <authorList>
            <person name="Thomson N.R."/>
            <person name="Clayton D.J."/>
            <person name="Windhorst D."/>
            <person name="Vernikos G."/>
            <person name="Davidson S."/>
            <person name="Churcher C."/>
            <person name="Quail M.A."/>
            <person name="Stevens M."/>
            <person name="Jones M.A."/>
            <person name="Watson M."/>
            <person name="Barron A."/>
            <person name="Layton A."/>
            <person name="Pickard D."/>
            <person name="Kingsley R.A."/>
            <person name="Bignell A."/>
            <person name="Clark L."/>
            <person name="Harris B."/>
            <person name="Ormond D."/>
            <person name="Abdellah Z."/>
            <person name="Brooks K."/>
            <person name="Cherevach I."/>
            <person name="Chillingworth T."/>
            <person name="Woodward J."/>
            <person name="Norberczak H."/>
            <person name="Lord A."/>
            <person name="Arrowsmith C."/>
            <person name="Jagels K."/>
            <person name="Moule S."/>
            <person name="Mungall K."/>
            <person name="Saunders M."/>
            <person name="Whitehead S."/>
            <person name="Chabalgoity J.A."/>
            <person name="Maskell D."/>
            <person name="Humphreys T."/>
            <person name="Roberts M."/>
            <person name="Barrow P.A."/>
            <person name="Dougan G."/>
            <person name="Parkhill J."/>
        </authorList>
    </citation>
    <scope>NUCLEOTIDE SEQUENCE [LARGE SCALE GENOMIC DNA]</scope>
    <source>
        <strain>P125109</strain>
    </source>
</reference>
<comment type="subcellular location">
    <subcellularLocation>
        <location evidence="1">Cell inner membrane</location>
        <topology evidence="1">Multi-pass membrane protein</topology>
    </subcellularLocation>
</comment>
<comment type="similarity">
    <text evidence="1">Belongs to the PsiE family.</text>
</comment>
<dbReference type="EMBL" id="AM933172">
    <property type="protein sequence ID" value="CAR35559.1"/>
    <property type="molecule type" value="Genomic_DNA"/>
</dbReference>
<dbReference type="RefSeq" id="WP_000982752.1">
    <property type="nucleotide sequence ID" value="NC_011294.1"/>
</dbReference>
<dbReference type="SMR" id="B5QYI9"/>
<dbReference type="KEGG" id="set:SEN3993"/>
<dbReference type="HOGENOM" id="CLU_127561_0_1_6"/>
<dbReference type="Proteomes" id="UP000000613">
    <property type="component" value="Chromosome"/>
</dbReference>
<dbReference type="GO" id="GO:0005886">
    <property type="term" value="C:plasma membrane"/>
    <property type="evidence" value="ECO:0007669"/>
    <property type="project" value="UniProtKB-SubCell"/>
</dbReference>
<dbReference type="GO" id="GO:0016036">
    <property type="term" value="P:cellular response to phosphate starvation"/>
    <property type="evidence" value="ECO:0007669"/>
    <property type="project" value="InterPro"/>
</dbReference>
<dbReference type="HAMAP" id="MF_01048">
    <property type="entry name" value="PsiE"/>
    <property type="match status" value="1"/>
</dbReference>
<dbReference type="InterPro" id="IPR009315">
    <property type="entry name" value="P_starv_induced_PsiE"/>
</dbReference>
<dbReference type="InterPro" id="IPR020948">
    <property type="entry name" value="P_starv_induced_PsiE-like"/>
</dbReference>
<dbReference type="NCBIfam" id="NF002764">
    <property type="entry name" value="PRK02833.1-2"/>
    <property type="match status" value="1"/>
</dbReference>
<dbReference type="NCBIfam" id="NF002765">
    <property type="entry name" value="PRK02833.1-3"/>
    <property type="match status" value="1"/>
</dbReference>
<dbReference type="NCBIfam" id="NF002767">
    <property type="entry name" value="PRK02833.1-5"/>
    <property type="match status" value="1"/>
</dbReference>
<dbReference type="PANTHER" id="PTHR37819">
    <property type="entry name" value="PROTEIN PSIE"/>
    <property type="match status" value="1"/>
</dbReference>
<dbReference type="PANTHER" id="PTHR37819:SF1">
    <property type="entry name" value="PROTEIN PSIE"/>
    <property type="match status" value="1"/>
</dbReference>
<dbReference type="Pfam" id="PF06146">
    <property type="entry name" value="PsiE"/>
    <property type="match status" value="1"/>
</dbReference>
<dbReference type="PIRSF" id="PIRSF029598">
    <property type="entry name" value="PsiE"/>
    <property type="match status" value="1"/>
</dbReference>